<protein>
    <recommendedName>
        <fullName>Nucleoprotein</fullName>
        <ecNumber evidence="5">3.1.-.-</ecNumber>
    </recommendedName>
    <alternativeName>
        <fullName>Nucleocapsid protein</fullName>
        <shortName>Protein N</shortName>
    </alternativeName>
</protein>
<evidence type="ECO:0000250" key="1">
    <source>
        <dbReference type="UniProtKB" id="O36307"/>
    </source>
</evidence>
<evidence type="ECO:0000250" key="2">
    <source>
        <dbReference type="UniProtKB" id="P05133"/>
    </source>
</evidence>
<evidence type="ECO:0000250" key="3">
    <source>
        <dbReference type="UniProtKB" id="P27313"/>
    </source>
</evidence>
<evidence type="ECO:0000250" key="4">
    <source>
        <dbReference type="UniProtKB" id="Q88918"/>
    </source>
</evidence>
<evidence type="ECO:0000250" key="5">
    <source>
        <dbReference type="UniProtKB" id="Q89462"/>
    </source>
</evidence>
<evidence type="ECO:0000255" key="6"/>
<evidence type="ECO:0000256" key="7">
    <source>
        <dbReference type="SAM" id="MobiDB-lite"/>
    </source>
</evidence>
<evidence type="ECO:0000305" key="8"/>
<organismHost>
    <name type="scientific">Homo sapiens</name>
    <name type="common">Human</name>
    <dbReference type="NCBI Taxonomy" id="9606"/>
</organismHost>
<organismHost>
    <name type="scientific">Myodes glareolus</name>
    <name type="common">Bank vole</name>
    <name type="synonym">Clethrionomys glareolus</name>
    <dbReference type="NCBI Taxonomy" id="447135"/>
</organismHost>
<dbReference type="EC" id="3.1.-.-" evidence="5"/>
<dbReference type="EMBL" id="Z21497">
    <property type="protein sequence ID" value="CAA79706.1"/>
    <property type="molecule type" value="Genomic_RNA"/>
</dbReference>
<dbReference type="PIR" id="S33171">
    <property type="entry name" value="S33171"/>
</dbReference>
<dbReference type="SMR" id="Q07513"/>
<dbReference type="GO" id="GO:0019029">
    <property type="term" value="C:helical viral capsid"/>
    <property type="evidence" value="ECO:0007669"/>
    <property type="project" value="UniProtKB-KW"/>
</dbReference>
<dbReference type="GO" id="GO:0044177">
    <property type="term" value="C:host cell Golgi apparatus"/>
    <property type="evidence" value="ECO:0007669"/>
    <property type="project" value="UniProtKB-SubCell"/>
</dbReference>
<dbReference type="GO" id="GO:0044220">
    <property type="term" value="C:host cell perinuclear region of cytoplasm"/>
    <property type="evidence" value="ECO:0007669"/>
    <property type="project" value="UniProtKB-SubCell"/>
</dbReference>
<dbReference type="GO" id="GO:1990904">
    <property type="term" value="C:ribonucleoprotein complex"/>
    <property type="evidence" value="ECO:0007669"/>
    <property type="project" value="UniProtKB-KW"/>
</dbReference>
<dbReference type="GO" id="GO:0019013">
    <property type="term" value="C:viral nucleocapsid"/>
    <property type="evidence" value="ECO:0007669"/>
    <property type="project" value="UniProtKB-KW"/>
</dbReference>
<dbReference type="GO" id="GO:0004519">
    <property type="term" value="F:endonuclease activity"/>
    <property type="evidence" value="ECO:0007669"/>
    <property type="project" value="UniProtKB-KW"/>
</dbReference>
<dbReference type="GO" id="GO:0003723">
    <property type="term" value="F:RNA binding"/>
    <property type="evidence" value="ECO:0007669"/>
    <property type="project" value="UniProtKB-KW"/>
</dbReference>
<dbReference type="Gene3D" id="1.20.58.90">
    <property type="match status" value="1"/>
</dbReference>
<dbReference type="InterPro" id="IPR002214">
    <property type="entry name" value="Hanta_nucleocap"/>
</dbReference>
<dbReference type="Pfam" id="PF00846">
    <property type="entry name" value="Hanta_nucleocap"/>
    <property type="match status" value="1"/>
</dbReference>
<dbReference type="PIRSF" id="PIRSF003949">
    <property type="entry name" value="N_HantaV"/>
    <property type="match status" value="1"/>
</dbReference>
<accession>Q07513</accession>
<keyword id="KW-0167">Capsid protein</keyword>
<keyword id="KW-0143">Chaperone</keyword>
<keyword id="KW-0175">Coiled coil</keyword>
<keyword id="KW-0255">Endonuclease</keyword>
<keyword id="KW-1139">Helical capsid protein</keyword>
<keyword id="KW-1035">Host cytoplasm</keyword>
<keyword id="KW-1040">Host Golgi apparatus</keyword>
<keyword id="KW-0378">Hydrolase</keyword>
<keyword id="KW-0540">Nuclease</keyword>
<keyword id="KW-0687">Ribonucleoprotein</keyword>
<keyword id="KW-0694">RNA-binding</keyword>
<keyword id="KW-0543">Viral nucleoprotein</keyword>
<keyword id="KW-0946">Virion</keyword>
<proteinExistence type="inferred from homology"/>
<gene>
    <name type="primary">N</name>
</gene>
<sequence length="433" mass="49526">MSDLTDIQEEITRHEQQLVVARQKLKDAERAVEVDPDDVNKNTLQARQQTVSALEDKLADYKRRMADAVSRKKMDTKPTDPTGIEPDDHLKERSSLRYGNVLDVNAIDIEEPSGQTADWYTIGVYVIGFTIPIILKALYMLSTRGRQTVKENKGTRIRFKDDTSFEDINGIRRPKHLYVSMPTAQSTMKAEELTPGRFRTIVCGLFPTQIQVRNIMSPVMGVIGFSFFVKDWPERIRDFMEKECPFIKPEVKPGTPAQEIEFLKRNRVYFMTRQDVLDKNHVADIDKLIDYAASGDPTSPDDIESPNAPWVFACAPDRCPPTCIYVVGMAELGAFFSILQDMRNTIMASKTVGTAEEKLKKKSSFYQSYLRRTQSMGIQLDQRIILLYMLEWGKEMVDHFHLGDDMDPELRGLAQSLIDQKVKEISNQEPLKI</sequence>
<reference key="1">
    <citation type="journal article" date="1994" name="J. Gen. Virol.">
        <title>Sequences of wild Puumala virus genes show a correlation of genetic variation with geographic origin of the strains.</title>
        <authorList>
            <person name="Plyusnin A."/>
            <person name="Vapalahti O."/>
            <person name="Ulfves K."/>
            <person name="Lehvaeslaiho H."/>
            <person name="Apekina N."/>
            <person name="Gavrilovskaya I."/>
            <person name="Blinov V."/>
            <person name="Vaheri A."/>
        </authorList>
    </citation>
    <scope>NUCLEOTIDE SEQUENCE [GENOMIC RNA]</scope>
</reference>
<comment type="function">
    <text evidence="1 2 5 8">Encapsidates the genome protecting it from nucleases (Probable). The encapsidated genomic RNA is termed the nucleocapsid (NC) and serves as template for transcription and replication (Probable). The nucleocapsid has a left-handed helical structure (By similarity). As a trimer, specifically binds and acts as a chaperone to unwind the panhandle structure formed by the viral RNA (vRNA) termini (By similarity). Involved in the transcription and replication initiation of vRNA by mediating primer annealing (By similarity). Plays a role in cap snatching by sequestering capped RNAs in P bodies for use by the viral RdRp during transcription initiation (By similarity). Substitutes for the cellular cap-binding complex (eIF4F) to preferentially facilitate the translation of capped mRNAs (By similarity). Initiates the translation by specifically binding to the cap and 40S ribosomal subunit (By similarity). Prevents the viral glycoprotein N (Gn) from autophagy-dependent breakdown maybe by blocking autophagosome formation (By similarity). Inhibits host EIF2AK2/PKR dimerization to prevent PKR-induced translational shutdown in cells and thus the activation of the antiviral state (By similarity). Also displays sequence-unspecific DNA endonuclease activity (By similarity).</text>
</comment>
<comment type="subunit">
    <text evidence="2 3 4 5">Homotrimer (By similarity). Homomultimer (By similarity). Homomultimerizes and binds to viral genomic RNA to form the nucleocapsid (By similarity). Interacts with host MAP1LC3B; this interaction participates to the protection of Gn from virus-triggered autophagy (By similarity). Interacts with host SNAP29; this interaction participates to the protection of glycoprotein N from virus-triggered autophagy (By similarity). Interacts (via N-terminus) with host RPS19; this interaction probably mediates the loading of the 40S ribosomal subunit on viral capped mRNA during N-mediated translation initiation (By similarity). Interacts with the viral RdRp (By similarity). Interacts with host SUMO1 (via N-terminus) (By similarity). Interacts with host DAXX (By similarity). Interacts with the viral glycoprotein N (via C-terminus) (By similarity). Interacts with the viral glycoprotein C (via C-terminus) (By similarity).</text>
</comment>
<comment type="subcellular location">
    <subcellularLocation>
        <location evidence="2">Virion</location>
    </subcellularLocation>
    <subcellularLocation>
        <location evidence="2">Host cytoplasm</location>
        <location evidence="2">Host perinuclear region</location>
    </subcellularLocation>
    <subcellularLocation>
        <location evidence="2">Host Golgi apparatus</location>
        <location evidence="2">Host cis-Golgi network</location>
    </subcellularLocation>
    <text evidence="2">Internal protein of virus particle.</text>
</comment>
<comment type="domain">
    <text evidence="2 5">The N-terminus is required for chaperone activity and, in trimeric form, this region likely serves in high affinity vRNA panhandle recognition (By similarity). The N-terminus also contains a coiled coil region, which probably participates in but is insufficient to initiate N trimerization (By similarity). The YxxL motif is indispensable for the interaction with host MAP1LC3B (By similarity). The central region is involved in specific RNA-binding (By similarity). Has distinct cap- and RNA-binding sites so it can bind simultaneously both the vRNA and mRNA cap (By similarity).</text>
</comment>
<comment type="similarity">
    <text evidence="8">Belongs to the hantavirus nucleocapsid protein family.</text>
</comment>
<organism>
    <name type="scientific">Puumala virus (strain Udmurtia/894CG/91)</name>
    <dbReference type="NCBI Taxonomy" id="39003"/>
    <lineage>
        <taxon>Viruses</taxon>
        <taxon>Riboviria</taxon>
        <taxon>Orthornavirae</taxon>
        <taxon>Negarnaviricota</taxon>
        <taxon>Polyploviricotina</taxon>
        <taxon>Ellioviricetes</taxon>
        <taxon>Bunyavirales</taxon>
        <taxon>Hantaviridae</taxon>
        <taxon>Mammantavirinae</taxon>
        <taxon>Orthohantavirus</taxon>
        <taxon>Orthohantavirus puumalaense</taxon>
    </lineage>
</organism>
<name>NCAP_PUUMU</name>
<feature type="chain" id="PRO_0000222017" description="Nucleoprotein">
    <location>
        <begin position="1"/>
        <end position="433"/>
    </location>
</feature>
<feature type="region of interest" description="Viral panhandle binding" evidence="5">
    <location>
        <begin position="1"/>
        <end position="175"/>
    </location>
</feature>
<feature type="region of interest" description="Chaperone activity" evidence="5">
    <location>
        <begin position="1"/>
        <end position="100"/>
    </location>
</feature>
<feature type="region of interest" description="Homomultimerization" evidence="4">
    <location>
        <begin position="1"/>
        <end position="79"/>
    </location>
</feature>
<feature type="region of interest" description="RdRP binding" evidence="5">
    <location>
        <begin position="1"/>
        <end position="50"/>
    </location>
</feature>
<feature type="region of interest" description="Disordered" evidence="7">
    <location>
        <begin position="67"/>
        <end position="92"/>
    </location>
</feature>
<feature type="region of interest" description="Interaction with glycoprotein N" evidence="4">
    <location>
        <begin position="80"/>
        <end position="248"/>
    </location>
</feature>
<feature type="region of interest" description="Homomultimerization" evidence="2">
    <location>
        <begin position="100"/>
        <end position="125"/>
    </location>
</feature>
<feature type="region of interest" description="Interaction with host RPS19" evidence="5">
    <location>
        <begin position="150"/>
        <end position="175"/>
    </location>
</feature>
<feature type="region of interest" description="Viral RNA-binding" evidence="2">
    <location>
        <begin position="175"/>
        <end position="217"/>
    </location>
</feature>
<feature type="region of interest" description="Interaction with host UBE2I/UBC9" evidence="2">
    <location>
        <begin position="188"/>
        <end position="191"/>
    </location>
</feature>
<feature type="region of interest" description="Interaction with host DAXX" evidence="3">
    <location>
        <begin position="377"/>
        <end position="433"/>
    </location>
</feature>
<feature type="region of interest" description="Homomultimerization" evidence="4">
    <location>
        <begin position="377"/>
        <end position="425"/>
    </location>
</feature>
<feature type="coiled-coil region" evidence="6">
    <location>
        <begin position="4"/>
        <end position="71"/>
    </location>
</feature>
<feature type="short sequence motif" description="YxxL" evidence="2">
    <location>
        <begin position="178"/>
        <end position="181"/>
    </location>
</feature>
<feature type="compositionally biased region" description="Basic and acidic residues" evidence="7">
    <location>
        <begin position="67"/>
        <end position="78"/>
    </location>
</feature>
<feature type="site" description="Important for the endonuclease activity" evidence="5">
    <location>
        <position position="88"/>
    </location>
</feature>
<feature type="site" description="Important for the endonuclease activity" evidence="5">
    <location>
        <position position="103"/>
    </location>
</feature>